<accession>Q8ES75</accession>
<reference key="1">
    <citation type="journal article" date="2002" name="Nucleic Acids Res.">
        <title>Genome sequence of Oceanobacillus iheyensis isolated from the Iheya Ridge and its unexpected adaptive capabilities to extreme environments.</title>
        <authorList>
            <person name="Takami H."/>
            <person name="Takaki Y."/>
            <person name="Uchiyama I."/>
        </authorList>
    </citation>
    <scope>NUCLEOTIDE SEQUENCE [LARGE SCALE GENOMIC DNA]</scope>
    <source>
        <strain>DSM 14371 / CIP 107618 / JCM 11309 / KCTC 3954 / HTE831</strain>
    </source>
</reference>
<protein>
    <recommendedName>
        <fullName>Uncharacterized RNA methyltransferase OB0768</fullName>
        <ecNumber>2.1.1.-</ecNumber>
    </recommendedName>
</protein>
<organism>
    <name type="scientific">Oceanobacillus iheyensis (strain DSM 14371 / CIP 107618 / JCM 11309 / KCTC 3954 / HTE831)</name>
    <dbReference type="NCBI Taxonomy" id="221109"/>
    <lineage>
        <taxon>Bacteria</taxon>
        <taxon>Bacillati</taxon>
        <taxon>Bacillota</taxon>
        <taxon>Bacilli</taxon>
        <taxon>Bacillales</taxon>
        <taxon>Bacillaceae</taxon>
        <taxon>Oceanobacillus</taxon>
    </lineage>
</organism>
<feature type="chain" id="PRO_0000162005" description="Uncharacterized RNA methyltransferase OB0768">
    <location>
        <begin position="1"/>
        <end position="459"/>
    </location>
</feature>
<feature type="domain" description="TRAM" evidence="2">
    <location>
        <begin position="7"/>
        <end position="65"/>
    </location>
</feature>
<feature type="active site" description="Nucleophile" evidence="3">
    <location>
        <position position="413"/>
    </location>
</feature>
<feature type="binding site" evidence="1">
    <location>
        <position position="78"/>
    </location>
    <ligand>
        <name>[4Fe-4S] cluster</name>
        <dbReference type="ChEBI" id="CHEBI:49883"/>
    </ligand>
</feature>
<feature type="binding site" evidence="1">
    <location>
        <position position="82"/>
    </location>
    <ligand>
        <name>[4Fe-4S] cluster</name>
        <dbReference type="ChEBI" id="CHEBI:49883"/>
    </ligand>
</feature>
<feature type="binding site" evidence="1">
    <location>
        <position position="85"/>
    </location>
    <ligand>
        <name>[4Fe-4S] cluster</name>
        <dbReference type="ChEBI" id="CHEBI:49883"/>
    </ligand>
</feature>
<feature type="binding site" evidence="1">
    <location>
        <position position="164"/>
    </location>
    <ligand>
        <name>[4Fe-4S] cluster</name>
        <dbReference type="ChEBI" id="CHEBI:49883"/>
    </ligand>
</feature>
<feature type="binding site" evidence="3">
    <location>
        <position position="288"/>
    </location>
    <ligand>
        <name>S-adenosyl-L-methionine</name>
        <dbReference type="ChEBI" id="CHEBI:59789"/>
    </ligand>
</feature>
<feature type="binding site" evidence="3">
    <location>
        <position position="317"/>
    </location>
    <ligand>
        <name>S-adenosyl-L-methionine</name>
        <dbReference type="ChEBI" id="CHEBI:59789"/>
    </ligand>
</feature>
<feature type="binding site" evidence="3">
    <location>
        <position position="338"/>
    </location>
    <ligand>
        <name>S-adenosyl-L-methionine</name>
        <dbReference type="ChEBI" id="CHEBI:59789"/>
    </ligand>
</feature>
<feature type="binding site" evidence="3">
    <location>
        <position position="386"/>
    </location>
    <ligand>
        <name>S-adenosyl-L-methionine</name>
        <dbReference type="ChEBI" id="CHEBI:59789"/>
    </ligand>
</feature>
<name>Y768_OCEIH</name>
<sequence>MAKTKPPVNKNEIYTLTFEDLTHEGNGVAKIEGYPLFVPEVLPDEQAKVKVVKVNKNFGFGKLLELTKTSSHRVEPTCHVHCGGCQLQHMSYDLQLQMKQGQVHNVMKKVAHLDQVPVHPILGMEEPSHYRNKVQIPVGEKNGEVIVGFYQKRSHRILQNQDTCHIQDEAINEVLPFTRQLMNKYGIQAYDEKSHRGQLRHIMVRVGHYTKDIMIVFVTKTSKFPEKDRIIKELTEQFPQVKSIVQNVNDQRTNVVLGKKTKVLWGENYIYDKIGDLTFAISPKSFFQVNPVQTKVLYDKALEYANIDKDDVVIDAYCGIGSISLFLAQKAKKVYGIEVVPEAIEDAKMNAEINGMNNVEFSVGQAEKVMPKWKEQGLDPDVIVVDPPRKGCDVDFLEAMIAMKPKRIVYVSCNPSTLARDLRILEDGGFETKQVQPVDMFPSTNHVECVAELTLKLSN</sequence>
<comment type="similarity">
    <text evidence="3">Belongs to the class I-like SAM-binding methyltransferase superfamily. RNA M5U methyltransferase family.</text>
</comment>
<keyword id="KW-0004">4Fe-4S</keyword>
<keyword id="KW-0408">Iron</keyword>
<keyword id="KW-0411">Iron-sulfur</keyword>
<keyword id="KW-0479">Metal-binding</keyword>
<keyword id="KW-0489">Methyltransferase</keyword>
<keyword id="KW-1185">Reference proteome</keyword>
<keyword id="KW-0949">S-adenosyl-L-methionine</keyword>
<keyword id="KW-0808">Transferase</keyword>
<proteinExistence type="inferred from homology"/>
<evidence type="ECO:0000250" key="1"/>
<evidence type="ECO:0000255" key="2">
    <source>
        <dbReference type="PROSITE-ProRule" id="PRU00208"/>
    </source>
</evidence>
<evidence type="ECO:0000255" key="3">
    <source>
        <dbReference type="PROSITE-ProRule" id="PRU01024"/>
    </source>
</evidence>
<dbReference type="EC" id="2.1.1.-"/>
<dbReference type="EMBL" id="BA000028">
    <property type="protein sequence ID" value="BAC12724.1"/>
    <property type="molecule type" value="Genomic_DNA"/>
</dbReference>
<dbReference type="RefSeq" id="WP_011065176.1">
    <property type="nucleotide sequence ID" value="NC_004193.1"/>
</dbReference>
<dbReference type="SMR" id="Q8ES75"/>
<dbReference type="STRING" id="221109.gene:10732989"/>
<dbReference type="KEGG" id="oih:OB0768"/>
<dbReference type="eggNOG" id="COG2265">
    <property type="taxonomic scope" value="Bacteria"/>
</dbReference>
<dbReference type="HOGENOM" id="CLU_014689_7_0_9"/>
<dbReference type="OrthoDB" id="9804590at2"/>
<dbReference type="PhylomeDB" id="Q8ES75"/>
<dbReference type="Proteomes" id="UP000000822">
    <property type="component" value="Chromosome"/>
</dbReference>
<dbReference type="GO" id="GO:0051539">
    <property type="term" value="F:4 iron, 4 sulfur cluster binding"/>
    <property type="evidence" value="ECO:0007669"/>
    <property type="project" value="UniProtKB-KW"/>
</dbReference>
<dbReference type="GO" id="GO:0046872">
    <property type="term" value="F:metal ion binding"/>
    <property type="evidence" value="ECO:0007669"/>
    <property type="project" value="UniProtKB-KW"/>
</dbReference>
<dbReference type="GO" id="GO:0070041">
    <property type="term" value="F:rRNA (uridine-C5-)-methyltransferase activity"/>
    <property type="evidence" value="ECO:0007669"/>
    <property type="project" value="TreeGrafter"/>
</dbReference>
<dbReference type="GO" id="GO:0070475">
    <property type="term" value="P:rRNA base methylation"/>
    <property type="evidence" value="ECO:0007669"/>
    <property type="project" value="TreeGrafter"/>
</dbReference>
<dbReference type="CDD" id="cd02440">
    <property type="entry name" value="AdoMet_MTases"/>
    <property type="match status" value="1"/>
</dbReference>
<dbReference type="FunFam" id="3.40.50.150:FF:000009">
    <property type="entry name" value="23S rRNA (Uracil(1939)-C(5))-methyltransferase RlmD"/>
    <property type="match status" value="1"/>
</dbReference>
<dbReference type="FunFam" id="2.40.50.140:FF:000097">
    <property type="entry name" value="23S rRNA (uracil(1939)-C(5))-methyltransferase RlmD"/>
    <property type="match status" value="1"/>
</dbReference>
<dbReference type="FunFam" id="2.40.50.1070:FF:000003">
    <property type="entry name" value="23S rRNA (Uracil-5-)-methyltransferase RumA"/>
    <property type="match status" value="1"/>
</dbReference>
<dbReference type="Gene3D" id="2.40.50.1070">
    <property type="match status" value="1"/>
</dbReference>
<dbReference type="Gene3D" id="2.40.50.140">
    <property type="entry name" value="Nucleic acid-binding proteins"/>
    <property type="match status" value="1"/>
</dbReference>
<dbReference type="Gene3D" id="3.40.50.150">
    <property type="entry name" value="Vaccinia Virus protein VP39"/>
    <property type="match status" value="1"/>
</dbReference>
<dbReference type="InterPro" id="IPR030390">
    <property type="entry name" value="MeTrfase_TrmA_AS"/>
</dbReference>
<dbReference type="InterPro" id="IPR012340">
    <property type="entry name" value="NA-bd_OB-fold"/>
</dbReference>
<dbReference type="InterPro" id="IPR029063">
    <property type="entry name" value="SAM-dependent_MTases_sf"/>
</dbReference>
<dbReference type="InterPro" id="IPR002792">
    <property type="entry name" value="TRAM_dom"/>
</dbReference>
<dbReference type="InterPro" id="IPR010280">
    <property type="entry name" value="U5_MeTrfase_fam"/>
</dbReference>
<dbReference type="NCBIfam" id="TIGR00479">
    <property type="entry name" value="rumA"/>
    <property type="match status" value="1"/>
</dbReference>
<dbReference type="PANTHER" id="PTHR11061">
    <property type="entry name" value="RNA M5U METHYLTRANSFERASE"/>
    <property type="match status" value="1"/>
</dbReference>
<dbReference type="PANTHER" id="PTHR11061:SF30">
    <property type="entry name" value="TRNA (URACIL(54)-C(5))-METHYLTRANSFERASE"/>
    <property type="match status" value="1"/>
</dbReference>
<dbReference type="Pfam" id="PF01938">
    <property type="entry name" value="TRAM"/>
    <property type="match status" value="1"/>
</dbReference>
<dbReference type="Pfam" id="PF05958">
    <property type="entry name" value="tRNA_U5-meth_tr"/>
    <property type="match status" value="1"/>
</dbReference>
<dbReference type="SUPFAM" id="SSF50249">
    <property type="entry name" value="Nucleic acid-binding proteins"/>
    <property type="match status" value="1"/>
</dbReference>
<dbReference type="SUPFAM" id="SSF53335">
    <property type="entry name" value="S-adenosyl-L-methionine-dependent methyltransferases"/>
    <property type="match status" value="1"/>
</dbReference>
<dbReference type="PROSITE" id="PS51687">
    <property type="entry name" value="SAM_MT_RNA_M5U"/>
    <property type="match status" value="1"/>
</dbReference>
<dbReference type="PROSITE" id="PS50926">
    <property type="entry name" value="TRAM"/>
    <property type="match status" value="1"/>
</dbReference>
<dbReference type="PROSITE" id="PS01230">
    <property type="entry name" value="TRMA_1"/>
    <property type="match status" value="1"/>
</dbReference>
<gene>
    <name type="ordered locus">OB0768</name>
</gene>